<accession>P0CAF8</accession>
<dbReference type="EC" id="3.1.4.-" evidence="1"/>
<dbReference type="EMBL" id="AY261363">
    <property type="status" value="NOT_ANNOTATED_CDS"/>
    <property type="molecule type" value="Genomic_DNA"/>
</dbReference>
<dbReference type="Proteomes" id="UP000000859">
    <property type="component" value="Segment"/>
</dbReference>
<dbReference type="GO" id="GO:0048476">
    <property type="term" value="C:Holliday junction resolvase complex"/>
    <property type="evidence" value="ECO:0007669"/>
    <property type="project" value="TreeGrafter"/>
</dbReference>
<dbReference type="GO" id="GO:0048257">
    <property type="term" value="F:3'-flap endonuclease activity"/>
    <property type="evidence" value="ECO:0007669"/>
    <property type="project" value="TreeGrafter"/>
</dbReference>
<dbReference type="GO" id="GO:0008821">
    <property type="term" value="F:crossover junction DNA endonuclease activity"/>
    <property type="evidence" value="ECO:0007669"/>
    <property type="project" value="InterPro"/>
</dbReference>
<dbReference type="GO" id="GO:0003677">
    <property type="term" value="F:DNA binding"/>
    <property type="evidence" value="ECO:0007669"/>
    <property type="project" value="InterPro"/>
</dbReference>
<dbReference type="GO" id="GO:0006308">
    <property type="term" value="P:DNA catabolic process"/>
    <property type="evidence" value="ECO:0007669"/>
    <property type="project" value="InterPro"/>
</dbReference>
<dbReference type="GO" id="GO:0000727">
    <property type="term" value="P:double-strand break repair via break-induced replication"/>
    <property type="evidence" value="ECO:0007669"/>
    <property type="project" value="TreeGrafter"/>
</dbReference>
<dbReference type="GO" id="GO:0052170">
    <property type="term" value="P:symbiont-mediated suppression of host innate immune response"/>
    <property type="evidence" value="ECO:0007669"/>
    <property type="project" value="UniProtKB-KW"/>
</dbReference>
<dbReference type="GO" id="GO:0039502">
    <property type="term" value="P:symbiont-mediated suppression of host type I interferon-mediated signaling pathway"/>
    <property type="evidence" value="ECO:0007669"/>
    <property type="project" value="UniProtKB-KW"/>
</dbReference>
<dbReference type="Gene3D" id="3.40.50.10130">
    <property type="match status" value="1"/>
</dbReference>
<dbReference type="InterPro" id="IPR006166">
    <property type="entry name" value="ERCC4_domain"/>
</dbReference>
<dbReference type="InterPro" id="IPR033309">
    <property type="entry name" value="Mus81"/>
</dbReference>
<dbReference type="InterPro" id="IPR011335">
    <property type="entry name" value="Restrct_endonuc-II-like"/>
</dbReference>
<dbReference type="PANTHER" id="PTHR13451">
    <property type="entry name" value="CLASS II CROSSOVER JUNCTION ENDONUCLEASE MUS81"/>
    <property type="match status" value="1"/>
</dbReference>
<dbReference type="PANTHER" id="PTHR13451:SF0">
    <property type="entry name" value="CROSSOVER JUNCTION ENDONUCLEASE MUS81"/>
    <property type="match status" value="1"/>
</dbReference>
<dbReference type="Pfam" id="PF02732">
    <property type="entry name" value="ERCC4"/>
    <property type="match status" value="1"/>
</dbReference>
<dbReference type="SUPFAM" id="SSF52980">
    <property type="entry name" value="Restriction endonuclease-like"/>
    <property type="match status" value="1"/>
</dbReference>
<organism>
    <name type="scientific">African swine fever virus (isolate Tick/South Africa/Pretoriuskop Pr4/1996)</name>
    <name type="common">ASFV</name>
    <dbReference type="NCBI Taxonomy" id="561443"/>
    <lineage>
        <taxon>Viruses</taxon>
        <taxon>Varidnaviria</taxon>
        <taxon>Bamfordvirae</taxon>
        <taxon>Nucleocytoviricota</taxon>
        <taxon>Pokkesviricetes</taxon>
        <taxon>Asfuvirales</taxon>
        <taxon>Asfarviridae</taxon>
        <taxon>Asfivirus</taxon>
        <taxon>African swine fever virus</taxon>
    </lineage>
</organism>
<keyword id="KW-0945">Host-virus interaction</keyword>
<keyword id="KW-0378">Hydrolase</keyword>
<keyword id="KW-1090">Inhibition of host innate immune response by virus</keyword>
<keyword id="KW-1114">Inhibition of host interferon signaling pathway by virus</keyword>
<keyword id="KW-0922">Interferon antiviral system evasion</keyword>
<keyword id="KW-0426">Late protein</keyword>
<keyword id="KW-0899">Viral immunoevasion</keyword>
<organismHost>
    <name type="scientific">Ornithodoros</name>
    <name type="common">relapsing fever ticks</name>
    <dbReference type="NCBI Taxonomy" id="6937"/>
</organismHost>
<organismHost>
    <name type="scientific">Phacochoerus aethiopicus</name>
    <name type="common">Warthog</name>
    <dbReference type="NCBI Taxonomy" id="85517"/>
</organismHost>
<organismHost>
    <name type="scientific">Phacochoerus africanus</name>
    <name type="common">Warthog</name>
    <dbReference type="NCBI Taxonomy" id="41426"/>
</organismHost>
<organismHost>
    <name type="scientific">Potamochoerus larvatus</name>
    <name type="common">Bushpig</name>
    <dbReference type="NCBI Taxonomy" id="273792"/>
</organismHost>
<organismHost>
    <name type="scientific">Sus scrofa</name>
    <name type="common">Pig</name>
    <dbReference type="NCBI Taxonomy" id="9823"/>
</organismHost>
<name>VF364_ASFP4</name>
<protein>
    <recommendedName>
        <fullName>ERCC4 domain-containing protein EP364R</fullName>
        <shortName>pEP364R</shortName>
        <ecNumber evidence="1">3.1.4.-</ecNumber>
    </recommendedName>
</protein>
<proteinExistence type="inferred from homology"/>
<sequence length="369" mass="41341">MYFLVADHREHHVIPFLKTDFHHMHQNPIQKNQAFLEIKQLFTGDYLICKSPSTILACIERKTYKDFAASLKDGRYKNRQKMLSLREQTNCQLYFFVEGPAFPNPQKKINHVAYASIITAMTHLMVRDHMFVIQTKNEAHSSQKLVQLFYAFSKEMVCVVPTSLTPTDEELCIKLWSSLSGISGVIGKILANTCSVAHLVSGKLPSQNIDQLKTPSNRPFPKKVKRMLISISKGNKELEIKLLSGVPNIGKKLAAEILKDHALLFFLNQPVECLANIQIAQKTRTIKLGMKRAEAIHYFLNWCGSAHVTVDSQNITKASRPTMQVATQLIATQPAATQPLHDVSDDASSDASSPTGHQTLSKEMSLNTA</sequence>
<evidence type="ECO:0000250" key="1">
    <source>
        <dbReference type="UniProtKB" id="Q65151"/>
    </source>
</evidence>
<evidence type="ECO:0000256" key="2">
    <source>
        <dbReference type="SAM" id="MobiDB-lite"/>
    </source>
</evidence>
<evidence type="ECO:0000305" key="3"/>
<feature type="chain" id="PRO_0000373669" description="ERCC4 domain-containing protein EP364R">
    <location>
        <begin position="1"/>
        <end position="369"/>
    </location>
</feature>
<feature type="domain" description="ERCC4">
    <location>
        <begin position="3"/>
        <end position="101"/>
    </location>
</feature>
<feature type="region of interest" description="Disordered" evidence="2">
    <location>
        <begin position="339"/>
        <end position="369"/>
    </location>
</feature>
<feature type="compositionally biased region" description="Polar residues" evidence="2">
    <location>
        <begin position="354"/>
        <end position="369"/>
    </location>
</feature>
<gene>
    <name type="ordered locus">Pret-071</name>
</gene>
<reference key="1">
    <citation type="submission" date="2003-03" db="EMBL/GenBank/DDBJ databases">
        <title>African swine fever virus genomes.</title>
        <authorList>
            <person name="Kutish G.F."/>
            <person name="Rock D.L."/>
        </authorList>
    </citation>
    <scope>NUCLEOTIDE SEQUENCE [LARGE SCALE GENOMIC DNA]</scope>
</reference>
<comment type="function">
    <text evidence="1">Plays a role in the inhibition of type I interferon signaling pathway. Mechanistically, specifically interacts with 2',3'-cGAMP and cleaves it via its phosphodiesterase activity. In turn, prevents 2',3'-cGAMP interaction with host ER-resident STING1 leading to inhibition of downstream signaling pathway and type I interferon production.</text>
</comment>
<comment type="induction">
    <text evidence="1">Expressed in the late phase of the viral replicative cycle.</text>
</comment>
<comment type="similarity">
    <text evidence="3">Belongs to the asfivirus EP364R family.</text>
</comment>